<gene>
    <name type="ordered locus">BCE_2156</name>
</gene>
<comment type="catalytic activity">
    <reaction evidence="1">
        <text>acetaldehyde + NAD(+) + CoA = acetyl-CoA + NADH + H(+)</text>
        <dbReference type="Rhea" id="RHEA:23288"/>
        <dbReference type="ChEBI" id="CHEBI:15343"/>
        <dbReference type="ChEBI" id="CHEBI:15378"/>
        <dbReference type="ChEBI" id="CHEBI:57287"/>
        <dbReference type="ChEBI" id="CHEBI:57288"/>
        <dbReference type="ChEBI" id="CHEBI:57540"/>
        <dbReference type="ChEBI" id="CHEBI:57945"/>
        <dbReference type="EC" id="1.2.1.10"/>
    </reaction>
</comment>
<comment type="similarity">
    <text evidence="1">Belongs to the acetaldehyde dehydrogenase family.</text>
</comment>
<sequence>MKKVKAAIIGSGNIGTDLMYKLKNSKVIELNAMIGIDSESDGLKRAKEAGYEVFDNGIQAIIDNPSLADIVFDATSAKAHSYHAKILEELGKIVIDLTPAAYGPFVCPAIRNNDFLDKQNVNMITCGGQATIPIVHAINEVANVTYAEIVATISSLSAGPGTRANIDEFTITTKRGIEEIGGADKGKAIIILNPAEPPILMRDTIYCEVKDMDEVSIYEAIHKMVERVRTYVPGYSLKQEPMFDGNRVTVFLEVEGAGDYFPPYAGNLDIMTAAALKVGEEFATQIVSEKKRGVMNEAK</sequence>
<name>ACDH_BACC1</name>
<organism>
    <name type="scientific">Bacillus cereus (strain ATCC 10987 / NRS 248)</name>
    <dbReference type="NCBI Taxonomy" id="222523"/>
    <lineage>
        <taxon>Bacteria</taxon>
        <taxon>Bacillati</taxon>
        <taxon>Bacillota</taxon>
        <taxon>Bacilli</taxon>
        <taxon>Bacillales</taxon>
        <taxon>Bacillaceae</taxon>
        <taxon>Bacillus</taxon>
        <taxon>Bacillus cereus group</taxon>
    </lineage>
</organism>
<protein>
    <recommendedName>
        <fullName evidence="1">Acetaldehyde dehydrogenase</fullName>
        <ecNumber evidence="1">1.2.1.10</ecNumber>
    </recommendedName>
    <alternativeName>
        <fullName evidence="1">Acetaldehyde dehydrogenase [acetylating]</fullName>
    </alternativeName>
</protein>
<dbReference type="EC" id="1.2.1.10" evidence="1"/>
<dbReference type="EMBL" id="AE017194">
    <property type="protein sequence ID" value="AAS41077.1"/>
    <property type="molecule type" value="Genomic_DNA"/>
</dbReference>
<dbReference type="SMR" id="Q739I5"/>
<dbReference type="KEGG" id="bca:BCE_2156"/>
<dbReference type="HOGENOM" id="CLU_062208_0_0_9"/>
<dbReference type="Proteomes" id="UP000002527">
    <property type="component" value="Chromosome"/>
</dbReference>
<dbReference type="GO" id="GO:0008774">
    <property type="term" value="F:acetaldehyde dehydrogenase (acetylating) activity"/>
    <property type="evidence" value="ECO:0007669"/>
    <property type="project" value="UniProtKB-UniRule"/>
</dbReference>
<dbReference type="GO" id="GO:0051287">
    <property type="term" value="F:NAD binding"/>
    <property type="evidence" value="ECO:0007669"/>
    <property type="project" value="UniProtKB-UniRule"/>
</dbReference>
<dbReference type="GO" id="GO:0009056">
    <property type="term" value="P:catabolic process"/>
    <property type="evidence" value="ECO:0007669"/>
    <property type="project" value="UniProtKB-KW"/>
</dbReference>
<dbReference type="CDD" id="cd23933">
    <property type="entry name" value="ALDH_C"/>
    <property type="match status" value="1"/>
</dbReference>
<dbReference type="Gene3D" id="3.30.360.10">
    <property type="entry name" value="Dihydrodipicolinate Reductase, domain 2"/>
    <property type="match status" value="1"/>
</dbReference>
<dbReference type="Gene3D" id="3.40.50.720">
    <property type="entry name" value="NAD(P)-binding Rossmann-like Domain"/>
    <property type="match status" value="1"/>
</dbReference>
<dbReference type="HAMAP" id="MF_01657">
    <property type="entry name" value="Ac_ald_DH_ac"/>
    <property type="match status" value="1"/>
</dbReference>
<dbReference type="InterPro" id="IPR003361">
    <property type="entry name" value="Acetaldehyde_dehydrogenase"/>
</dbReference>
<dbReference type="InterPro" id="IPR015426">
    <property type="entry name" value="Acetylaldehyde_DH_C"/>
</dbReference>
<dbReference type="InterPro" id="IPR036291">
    <property type="entry name" value="NAD(P)-bd_dom_sf"/>
</dbReference>
<dbReference type="InterPro" id="IPR000534">
    <property type="entry name" value="Semialdehyde_DH_NAD-bd"/>
</dbReference>
<dbReference type="NCBIfam" id="TIGR03215">
    <property type="entry name" value="ac_ald_DH_ac"/>
    <property type="match status" value="1"/>
</dbReference>
<dbReference type="NCBIfam" id="NF006157">
    <property type="entry name" value="PRK08300.1"/>
    <property type="match status" value="1"/>
</dbReference>
<dbReference type="Pfam" id="PF09290">
    <property type="entry name" value="AcetDehyd-dimer"/>
    <property type="match status" value="1"/>
</dbReference>
<dbReference type="Pfam" id="PF01118">
    <property type="entry name" value="Semialdhyde_dh"/>
    <property type="match status" value="1"/>
</dbReference>
<dbReference type="PIRSF" id="PIRSF015689">
    <property type="entry name" value="Actaldh_dh_actl"/>
    <property type="match status" value="1"/>
</dbReference>
<dbReference type="SMART" id="SM00859">
    <property type="entry name" value="Semialdhyde_dh"/>
    <property type="match status" value="1"/>
</dbReference>
<dbReference type="SUPFAM" id="SSF55347">
    <property type="entry name" value="Glyceraldehyde-3-phosphate dehydrogenase-like, C-terminal domain"/>
    <property type="match status" value="1"/>
</dbReference>
<dbReference type="SUPFAM" id="SSF51735">
    <property type="entry name" value="NAD(P)-binding Rossmann-fold domains"/>
    <property type="match status" value="1"/>
</dbReference>
<reference key="1">
    <citation type="journal article" date="2004" name="Nucleic Acids Res.">
        <title>The genome sequence of Bacillus cereus ATCC 10987 reveals metabolic adaptations and a large plasmid related to Bacillus anthracis pXO1.</title>
        <authorList>
            <person name="Rasko D.A."/>
            <person name="Ravel J."/>
            <person name="Oekstad O.A."/>
            <person name="Helgason E."/>
            <person name="Cer R.Z."/>
            <person name="Jiang L."/>
            <person name="Shores K.A."/>
            <person name="Fouts D.E."/>
            <person name="Tourasse N.J."/>
            <person name="Angiuoli S.V."/>
            <person name="Kolonay J.F."/>
            <person name="Nelson W.C."/>
            <person name="Kolstoe A.-B."/>
            <person name="Fraser C.M."/>
            <person name="Read T.D."/>
        </authorList>
    </citation>
    <scope>NUCLEOTIDE SEQUENCE [LARGE SCALE GENOMIC DNA]</scope>
    <source>
        <strain>ATCC 10987 / NRS 248</strain>
    </source>
</reference>
<proteinExistence type="inferred from homology"/>
<feature type="chain" id="PRO_0000387624" description="Acetaldehyde dehydrogenase">
    <location>
        <begin position="1"/>
        <end position="299"/>
    </location>
</feature>
<feature type="active site" description="Acyl-thioester intermediate" evidence="1">
    <location>
        <position position="126"/>
    </location>
</feature>
<feature type="binding site" evidence="1">
    <location>
        <begin position="11"/>
        <end position="14"/>
    </location>
    <ligand>
        <name>NAD(+)</name>
        <dbReference type="ChEBI" id="CHEBI:57540"/>
    </ligand>
</feature>
<feature type="binding site" evidence="1">
    <location>
        <begin position="157"/>
        <end position="165"/>
    </location>
    <ligand>
        <name>NAD(+)</name>
        <dbReference type="ChEBI" id="CHEBI:57540"/>
    </ligand>
</feature>
<feature type="binding site" evidence="1">
    <location>
        <position position="267"/>
    </location>
    <ligand>
        <name>NAD(+)</name>
        <dbReference type="ChEBI" id="CHEBI:57540"/>
    </ligand>
</feature>
<accession>Q739I5</accession>
<keyword id="KW-0058">Aromatic hydrocarbons catabolism</keyword>
<keyword id="KW-0520">NAD</keyword>
<keyword id="KW-0560">Oxidoreductase</keyword>
<evidence type="ECO:0000255" key="1">
    <source>
        <dbReference type="HAMAP-Rule" id="MF_01657"/>
    </source>
</evidence>